<proteinExistence type="inferred from homology"/>
<sequence>MSIQIFNTLKREKEPFKPLKDGEVKMYVCGPTVYNYIHIGNARPIIVFDTVRRYFTYRGYDVKFVSNFTDVDDKLIRAANELKLTVPEVADRFIGAYFDDVDQLNVAKATVNPRVTENMDEIIQLISTLIEKGYAYESAGDVYFRTKKFKDYGKLSGQELSELQHGARVEYNERKQDELDFTLWKAAKPGEIFWESPFGNGRPGWHIECSALAKKYLGDTIDIHAGGQDLVFPHHEDEIAQSEAATGKTFANYWMHNAFLNIDGEKMSKSLGNFITLHDVLKDNDPNVIRFFMLSVHYRKPITLNDAILEDAKNGLERLMIAYQNIDHRIQTDDGEYVEEAHEDEWLEQLTELKQAFEDDMDDDFNTANAITTFHELAKRANIYLAKETVSINVLREFLSMMRLFAEVLGLKLENTQTDSLDDSEVEALIEERLQARNERNFARADEIRDILKEKNIILEDTAQGTRFRRG</sequence>
<name>SYC_LISMC</name>
<evidence type="ECO:0000255" key="1">
    <source>
        <dbReference type="HAMAP-Rule" id="MF_00041"/>
    </source>
</evidence>
<accession>C1KYH2</accession>
<organism>
    <name type="scientific">Listeria monocytogenes serotype 4b (strain CLIP80459)</name>
    <dbReference type="NCBI Taxonomy" id="568819"/>
    <lineage>
        <taxon>Bacteria</taxon>
        <taxon>Bacillati</taxon>
        <taxon>Bacillota</taxon>
        <taxon>Bacilli</taxon>
        <taxon>Bacillales</taxon>
        <taxon>Listeriaceae</taxon>
        <taxon>Listeria</taxon>
    </lineage>
</organism>
<dbReference type="EC" id="6.1.1.16" evidence="1"/>
<dbReference type="EMBL" id="FM242711">
    <property type="protein sequence ID" value="CAS04027.1"/>
    <property type="molecule type" value="Genomic_DNA"/>
</dbReference>
<dbReference type="RefSeq" id="WP_003724083.1">
    <property type="nucleotide sequence ID" value="NC_012488.1"/>
</dbReference>
<dbReference type="SMR" id="C1KYH2"/>
<dbReference type="KEGG" id="lmc:Lm4b_00259"/>
<dbReference type="HOGENOM" id="CLU_013528_0_1_9"/>
<dbReference type="GO" id="GO:0005829">
    <property type="term" value="C:cytosol"/>
    <property type="evidence" value="ECO:0007669"/>
    <property type="project" value="TreeGrafter"/>
</dbReference>
<dbReference type="GO" id="GO:0005524">
    <property type="term" value="F:ATP binding"/>
    <property type="evidence" value="ECO:0007669"/>
    <property type="project" value="UniProtKB-UniRule"/>
</dbReference>
<dbReference type="GO" id="GO:0004817">
    <property type="term" value="F:cysteine-tRNA ligase activity"/>
    <property type="evidence" value="ECO:0007669"/>
    <property type="project" value="UniProtKB-UniRule"/>
</dbReference>
<dbReference type="GO" id="GO:0008270">
    <property type="term" value="F:zinc ion binding"/>
    <property type="evidence" value="ECO:0007669"/>
    <property type="project" value="UniProtKB-UniRule"/>
</dbReference>
<dbReference type="GO" id="GO:0006423">
    <property type="term" value="P:cysteinyl-tRNA aminoacylation"/>
    <property type="evidence" value="ECO:0007669"/>
    <property type="project" value="UniProtKB-UniRule"/>
</dbReference>
<dbReference type="CDD" id="cd00672">
    <property type="entry name" value="CysRS_core"/>
    <property type="match status" value="1"/>
</dbReference>
<dbReference type="FunFam" id="1.20.120.1910:FF:000002">
    <property type="entry name" value="Cysteine--tRNA ligase"/>
    <property type="match status" value="1"/>
</dbReference>
<dbReference type="FunFam" id="3.40.50.620:FF:000009">
    <property type="entry name" value="Cysteine--tRNA ligase"/>
    <property type="match status" value="1"/>
</dbReference>
<dbReference type="Gene3D" id="1.20.120.1910">
    <property type="entry name" value="Cysteine-tRNA ligase, C-terminal anti-codon recognition domain"/>
    <property type="match status" value="1"/>
</dbReference>
<dbReference type="Gene3D" id="3.40.50.620">
    <property type="entry name" value="HUPs"/>
    <property type="match status" value="1"/>
</dbReference>
<dbReference type="HAMAP" id="MF_00041">
    <property type="entry name" value="Cys_tRNA_synth"/>
    <property type="match status" value="1"/>
</dbReference>
<dbReference type="InterPro" id="IPR015803">
    <property type="entry name" value="Cys-tRNA-ligase"/>
</dbReference>
<dbReference type="InterPro" id="IPR015273">
    <property type="entry name" value="Cys-tRNA-synt_Ia_DALR"/>
</dbReference>
<dbReference type="InterPro" id="IPR024909">
    <property type="entry name" value="Cys-tRNA/MSH_ligase"/>
</dbReference>
<dbReference type="InterPro" id="IPR014729">
    <property type="entry name" value="Rossmann-like_a/b/a_fold"/>
</dbReference>
<dbReference type="InterPro" id="IPR032678">
    <property type="entry name" value="tRNA-synt_1_cat_dom"/>
</dbReference>
<dbReference type="InterPro" id="IPR009080">
    <property type="entry name" value="tRNAsynth_Ia_anticodon-bd"/>
</dbReference>
<dbReference type="NCBIfam" id="TIGR00435">
    <property type="entry name" value="cysS"/>
    <property type="match status" value="1"/>
</dbReference>
<dbReference type="PANTHER" id="PTHR10890:SF3">
    <property type="entry name" value="CYSTEINE--TRNA LIGASE, CYTOPLASMIC"/>
    <property type="match status" value="1"/>
</dbReference>
<dbReference type="PANTHER" id="PTHR10890">
    <property type="entry name" value="CYSTEINYL-TRNA SYNTHETASE"/>
    <property type="match status" value="1"/>
</dbReference>
<dbReference type="Pfam" id="PF09190">
    <property type="entry name" value="DALR_2"/>
    <property type="match status" value="1"/>
</dbReference>
<dbReference type="Pfam" id="PF01406">
    <property type="entry name" value="tRNA-synt_1e"/>
    <property type="match status" value="1"/>
</dbReference>
<dbReference type="PRINTS" id="PR00983">
    <property type="entry name" value="TRNASYNTHCYS"/>
</dbReference>
<dbReference type="SMART" id="SM00840">
    <property type="entry name" value="DALR_2"/>
    <property type="match status" value="1"/>
</dbReference>
<dbReference type="SUPFAM" id="SSF47323">
    <property type="entry name" value="Anticodon-binding domain of a subclass of class I aminoacyl-tRNA synthetases"/>
    <property type="match status" value="1"/>
</dbReference>
<dbReference type="SUPFAM" id="SSF52374">
    <property type="entry name" value="Nucleotidylyl transferase"/>
    <property type="match status" value="1"/>
</dbReference>
<protein>
    <recommendedName>
        <fullName evidence="1">Cysteine--tRNA ligase</fullName>
        <ecNumber evidence="1">6.1.1.16</ecNumber>
    </recommendedName>
    <alternativeName>
        <fullName evidence="1">Cysteinyl-tRNA synthetase</fullName>
        <shortName evidence="1">CysRS</shortName>
    </alternativeName>
</protein>
<reference key="1">
    <citation type="journal article" date="2012" name="BMC Genomics">
        <title>Comparative genomics and transcriptomics of lineages I, II, and III strains of Listeria monocytogenes.</title>
        <authorList>
            <person name="Hain T."/>
            <person name="Ghai R."/>
            <person name="Billion A."/>
            <person name="Kuenne C.T."/>
            <person name="Steinweg C."/>
            <person name="Izar B."/>
            <person name="Mohamed W."/>
            <person name="Mraheil M."/>
            <person name="Domann E."/>
            <person name="Schaffrath S."/>
            <person name="Karst U."/>
            <person name="Goesmann A."/>
            <person name="Oehm S."/>
            <person name="Puhler A."/>
            <person name="Merkl R."/>
            <person name="Vorwerk S."/>
            <person name="Glaser P."/>
            <person name="Garrido P."/>
            <person name="Rusniok C."/>
            <person name="Buchrieser C."/>
            <person name="Goebel W."/>
            <person name="Chakraborty T."/>
        </authorList>
    </citation>
    <scope>NUCLEOTIDE SEQUENCE [LARGE SCALE GENOMIC DNA]</scope>
    <source>
        <strain>CLIP80459</strain>
    </source>
</reference>
<gene>
    <name evidence="1" type="primary">cysS</name>
    <name type="ordered locus">Lm4b_00259</name>
</gene>
<keyword id="KW-0030">Aminoacyl-tRNA synthetase</keyword>
<keyword id="KW-0067">ATP-binding</keyword>
<keyword id="KW-0963">Cytoplasm</keyword>
<keyword id="KW-0436">Ligase</keyword>
<keyword id="KW-0479">Metal-binding</keyword>
<keyword id="KW-0547">Nucleotide-binding</keyword>
<keyword id="KW-0648">Protein biosynthesis</keyword>
<keyword id="KW-0862">Zinc</keyword>
<feature type="chain" id="PRO_1000202127" description="Cysteine--tRNA ligase">
    <location>
        <begin position="1"/>
        <end position="471"/>
    </location>
</feature>
<feature type="short sequence motif" description="'HIGH' region">
    <location>
        <begin position="31"/>
        <end position="41"/>
    </location>
</feature>
<feature type="short sequence motif" description="'KMSKS' region">
    <location>
        <begin position="266"/>
        <end position="270"/>
    </location>
</feature>
<feature type="binding site" evidence="1">
    <location>
        <position position="29"/>
    </location>
    <ligand>
        <name>Zn(2+)</name>
        <dbReference type="ChEBI" id="CHEBI:29105"/>
    </ligand>
</feature>
<feature type="binding site" evidence="1">
    <location>
        <position position="209"/>
    </location>
    <ligand>
        <name>Zn(2+)</name>
        <dbReference type="ChEBI" id="CHEBI:29105"/>
    </ligand>
</feature>
<feature type="binding site" evidence="1">
    <location>
        <position position="234"/>
    </location>
    <ligand>
        <name>Zn(2+)</name>
        <dbReference type="ChEBI" id="CHEBI:29105"/>
    </ligand>
</feature>
<feature type="binding site" evidence="1">
    <location>
        <position position="238"/>
    </location>
    <ligand>
        <name>Zn(2+)</name>
        <dbReference type="ChEBI" id="CHEBI:29105"/>
    </ligand>
</feature>
<feature type="binding site" evidence="1">
    <location>
        <position position="269"/>
    </location>
    <ligand>
        <name>ATP</name>
        <dbReference type="ChEBI" id="CHEBI:30616"/>
    </ligand>
</feature>
<comment type="catalytic activity">
    <reaction evidence="1">
        <text>tRNA(Cys) + L-cysteine + ATP = L-cysteinyl-tRNA(Cys) + AMP + diphosphate</text>
        <dbReference type="Rhea" id="RHEA:17773"/>
        <dbReference type="Rhea" id="RHEA-COMP:9661"/>
        <dbReference type="Rhea" id="RHEA-COMP:9679"/>
        <dbReference type="ChEBI" id="CHEBI:30616"/>
        <dbReference type="ChEBI" id="CHEBI:33019"/>
        <dbReference type="ChEBI" id="CHEBI:35235"/>
        <dbReference type="ChEBI" id="CHEBI:78442"/>
        <dbReference type="ChEBI" id="CHEBI:78517"/>
        <dbReference type="ChEBI" id="CHEBI:456215"/>
        <dbReference type="EC" id="6.1.1.16"/>
    </reaction>
</comment>
<comment type="cofactor">
    <cofactor evidence="1">
        <name>Zn(2+)</name>
        <dbReference type="ChEBI" id="CHEBI:29105"/>
    </cofactor>
    <text evidence="1">Binds 1 zinc ion per subunit.</text>
</comment>
<comment type="subunit">
    <text evidence="1">Monomer.</text>
</comment>
<comment type="subcellular location">
    <subcellularLocation>
        <location evidence="1">Cytoplasm</location>
    </subcellularLocation>
</comment>
<comment type="similarity">
    <text evidence="1">Belongs to the class-I aminoacyl-tRNA synthetase family.</text>
</comment>